<comment type="function">
    <text evidence="1">Part of the phosphoribosylformylglycinamidine synthase complex involved in the purines biosynthetic pathway. Catalyzes the ATP-dependent conversion of formylglycinamide ribonucleotide (FGAR) and glutamine to yield formylglycinamidine ribonucleotide (FGAM) and glutamate. The FGAM synthase complex is composed of three subunits. PurQ produces an ammonia molecule by converting glutamine to glutamate. PurL transfers the ammonia molecule to FGAR to form FGAM in an ATP-dependent manner. PurS interacts with PurQ and PurL and is thought to assist in the transfer of the ammonia molecule from PurQ to PurL.</text>
</comment>
<comment type="catalytic activity">
    <reaction evidence="1">
        <text>N(2)-formyl-N(1)-(5-phospho-beta-D-ribosyl)glycinamide + L-glutamine + ATP + H2O = 2-formamido-N(1)-(5-O-phospho-beta-D-ribosyl)acetamidine + L-glutamate + ADP + phosphate + H(+)</text>
        <dbReference type="Rhea" id="RHEA:17129"/>
        <dbReference type="ChEBI" id="CHEBI:15377"/>
        <dbReference type="ChEBI" id="CHEBI:15378"/>
        <dbReference type="ChEBI" id="CHEBI:29985"/>
        <dbReference type="ChEBI" id="CHEBI:30616"/>
        <dbReference type="ChEBI" id="CHEBI:43474"/>
        <dbReference type="ChEBI" id="CHEBI:58359"/>
        <dbReference type="ChEBI" id="CHEBI:147286"/>
        <dbReference type="ChEBI" id="CHEBI:147287"/>
        <dbReference type="ChEBI" id="CHEBI:456216"/>
        <dbReference type="EC" id="6.3.5.3"/>
    </reaction>
</comment>
<comment type="catalytic activity">
    <reaction evidence="1">
        <text>L-glutamine + H2O = L-glutamate + NH4(+)</text>
        <dbReference type="Rhea" id="RHEA:15889"/>
        <dbReference type="ChEBI" id="CHEBI:15377"/>
        <dbReference type="ChEBI" id="CHEBI:28938"/>
        <dbReference type="ChEBI" id="CHEBI:29985"/>
        <dbReference type="ChEBI" id="CHEBI:58359"/>
        <dbReference type="EC" id="3.5.1.2"/>
    </reaction>
</comment>
<comment type="pathway">
    <text evidence="1">Purine metabolism; IMP biosynthesis via de novo pathway; 5-amino-1-(5-phospho-D-ribosyl)imidazole from N(2)-formyl-N(1)-(5-phospho-D-ribosyl)glycinamide: step 1/2.</text>
</comment>
<comment type="subunit">
    <text evidence="1">Part of the FGAM synthase complex composed of 1 PurL, 1 PurQ and 2 PurS subunits.</text>
</comment>
<comment type="subcellular location">
    <subcellularLocation>
        <location evidence="1">Cytoplasm</location>
    </subcellularLocation>
</comment>
<feature type="chain" id="PRO_1000124118" description="Phosphoribosylformylglycinamidine synthase subunit PurQ">
    <location>
        <begin position="1"/>
        <end position="227"/>
    </location>
</feature>
<feature type="domain" description="Glutamine amidotransferase type-1" evidence="1">
    <location>
        <begin position="3"/>
        <end position="225"/>
    </location>
</feature>
<feature type="active site" description="Nucleophile" evidence="1">
    <location>
        <position position="86"/>
    </location>
</feature>
<feature type="active site" evidence="1">
    <location>
        <position position="194"/>
    </location>
</feature>
<feature type="active site" evidence="1">
    <location>
        <position position="196"/>
    </location>
</feature>
<evidence type="ECO:0000255" key="1">
    <source>
        <dbReference type="HAMAP-Rule" id="MF_00421"/>
    </source>
</evidence>
<reference key="1">
    <citation type="submission" date="2008-04" db="EMBL/GenBank/DDBJ databases">
        <title>Complete sequence of chromosome of Exiguobacterium sibiricum 255-15.</title>
        <authorList>
            <consortium name="US DOE Joint Genome Institute"/>
            <person name="Copeland A."/>
            <person name="Lucas S."/>
            <person name="Lapidus A."/>
            <person name="Glavina del Rio T."/>
            <person name="Dalin E."/>
            <person name="Tice H."/>
            <person name="Bruce D."/>
            <person name="Goodwin L."/>
            <person name="Pitluck S."/>
            <person name="Kiss H."/>
            <person name="Chertkov O."/>
            <person name="Monk C."/>
            <person name="Brettin T."/>
            <person name="Detter J.C."/>
            <person name="Han C."/>
            <person name="Kuske C.R."/>
            <person name="Schmutz J."/>
            <person name="Larimer F."/>
            <person name="Land M."/>
            <person name="Hauser L."/>
            <person name="Kyrpides N."/>
            <person name="Mikhailova N."/>
            <person name="Vishnivetskaya T."/>
            <person name="Rodrigues D.F."/>
            <person name="Gilichinsky D."/>
            <person name="Tiedje J."/>
            <person name="Richardson P."/>
        </authorList>
    </citation>
    <scope>NUCLEOTIDE SEQUENCE [LARGE SCALE GENOMIC DNA]</scope>
    <source>
        <strain>DSM 17290 / CCUG 55495 / CIP 109462 / JCM 13490 / 255-15</strain>
    </source>
</reference>
<keyword id="KW-0067">ATP-binding</keyword>
<keyword id="KW-0963">Cytoplasm</keyword>
<keyword id="KW-0315">Glutamine amidotransferase</keyword>
<keyword id="KW-0378">Hydrolase</keyword>
<keyword id="KW-0436">Ligase</keyword>
<keyword id="KW-0547">Nucleotide-binding</keyword>
<keyword id="KW-0658">Purine biosynthesis</keyword>
<keyword id="KW-1185">Reference proteome</keyword>
<sequence>MKFAVIVFPGSNCDLDMYHAVKDALGEEVEYVFHTETSLEGYDGVLLPGGFSYGDYLRCGAIAQFSPIMEEVKRFAAEGKTVLGVCNGFQILVEAGLLPGVLHRNTGLKFMCRTVELKVENNETRFTSDYAAQETITIPIAHGEGNYYCDDATYAMLQTNRQIAFTYTDNPNGSRGDIAGITNKAGNVLGMMPHPERAVELLTGGTDGLKLFTSLVKQGAHHVKTTV</sequence>
<protein>
    <recommendedName>
        <fullName evidence="1">Phosphoribosylformylglycinamidine synthase subunit PurQ</fullName>
        <shortName evidence="1">FGAM synthase</shortName>
        <ecNumber evidence="1">6.3.5.3</ecNumber>
    </recommendedName>
    <alternativeName>
        <fullName evidence="1">Formylglycinamide ribonucleotide amidotransferase subunit I</fullName>
        <shortName evidence="1">FGAR amidotransferase I</shortName>
        <shortName evidence="1">FGAR-AT I</shortName>
    </alternativeName>
    <alternativeName>
        <fullName evidence="1">Glutaminase PurQ</fullName>
        <ecNumber evidence="1">3.5.1.2</ecNumber>
    </alternativeName>
    <alternativeName>
        <fullName evidence="1">Phosphoribosylformylglycinamidine synthase subunit I</fullName>
    </alternativeName>
</protein>
<dbReference type="EC" id="6.3.5.3" evidence="1"/>
<dbReference type="EC" id="3.5.1.2" evidence="1"/>
<dbReference type="EMBL" id="CP001022">
    <property type="protein sequence ID" value="ACB59934.1"/>
    <property type="molecule type" value="Genomic_DNA"/>
</dbReference>
<dbReference type="RefSeq" id="WP_012369358.1">
    <property type="nucleotide sequence ID" value="NC_010556.1"/>
</dbReference>
<dbReference type="SMR" id="B1YJ04"/>
<dbReference type="STRING" id="262543.Exig_0452"/>
<dbReference type="KEGG" id="esi:Exig_0452"/>
<dbReference type="eggNOG" id="COG0047">
    <property type="taxonomic scope" value="Bacteria"/>
</dbReference>
<dbReference type="HOGENOM" id="CLU_001031_3_1_9"/>
<dbReference type="OrthoDB" id="9804441at2"/>
<dbReference type="UniPathway" id="UPA00074">
    <property type="reaction ID" value="UER00128"/>
</dbReference>
<dbReference type="Proteomes" id="UP000001681">
    <property type="component" value="Chromosome"/>
</dbReference>
<dbReference type="GO" id="GO:0005737">
    <property type="term" value="C:cytoplasm"/>
    <property type="evidence" value="ECO:0007669"/>
    <property type="project" value="UniProtKB-SubCell"/>
</dbReference>
<dbReference type="GO" id="GO:0005524">
    <property type="term" value="F:ATP binding"/>
    <property type="evidence" value="ECO:0007669"/>
    <property type="project" value="UniProtKB-KW"/>
</dbReference>
<dbReference type="GO" id="GO:0004359">
    <property type="term" value="F:glutaminase activity"/>
    <property type="evidence" value="ECO:0007669"/>
    <property type="project" value="UniProtKB-EC"/>
</dbReference>
<dbReference type="GO" id="GO:0004642">
    <property type="term" value="F:phosphoribosylformylglycinamidine synthase activity"/>
    <property type="evidence" value="ECO:0007669"/>
    <property type="project" value="UniProtKB-UniRule"/>
</dbReference>
<dbReference type="GO" id="GO:0006189">
    <property type="term" value="P:'de novo' IMP biosynthetic process"/>
    <property type="evidence" value="ECO:0007669"/>
    <property type="project" value="UniProtKB-UniRule"/>
</dbReference>
<dbReference type="CDD" id="cd01740">
    <property type="entry name" value="GATase1_FGAR_AT"/>
    <property type="match status" value="1"/>
</dbReference>
<dbReference type="FunFam" id="3.40.50.880:FF:000019">
    <property type="entry name" value="Phosphoribosylformylglycinamidine synthase subunit PurQ"/>
    <property type="match status" value="1"/>
</dbReference>
<dbReference type="Gene3D" id="3.40.50.880">
    <property type="match status" value="1"/>
</dbReference>
<dbReference type="HAMAP" id="MF_00421">
    <property type="entry name" value="PurQ"/>
    <property type="match status" value="1"/>
</dbReference>
<dbReference type="InterPro" id="IPR029062">
    <property type="entry name" value="Class_I_gatase-like"/>
</dbReference>
<dbReference type="InterPro" id="IPR010075">
    <property type="entry name" value="PRibForGlyAmidine_synth_PurQ"/>
</dbReference>
<dbReference type="NCBIfam" id="TIGR01737">
    <property type="entry name" value="FGAM_synth_I"/>
    <property type="match status" value="1"/>
</dbReference>
<dbReference type="NCBIfam" id="NF002957">
    <property type="entry name" value="PRK03619.1"/>
    <property type="match status" value="1"/>
</dbReference>
<dbReference type="PANTHER" id="PTHR47552">
    <property type="entry name" value="PHOSPHORIBOSYLFORMYLGLYCINAMIDINE SYNTHASE SUBUNIT PURQ"/>
    <property type="match status" value="1"/>
</dbReference>
<dbReference type="PANTHER" id="PTHR47552:SF1">
    <property type="entry name" value="PHOSPHORIBOSYLFORMYLGLYCINAMIDINE SYNTHASE SUBUNIT PURQ"/>
    <property type="match status" value="1"/>
</dbReference>
<dbReference type="Pfam" id="PF13507">
    <property type="entry name" value="GATase_5"/>
    <property type="match status" value="1"/>
</dbReference>
<dbReference type="PIRSF" id="PIRSF001586">
    <property type="entry name" value="FGAM_synth_I"/>
    <property type="match status" value="1"/>
</dbReference>
<dbReference type="SMART" id="SM01211">
    <property type="entry name" value="GATase_5"/>
    <property type="match status" value="1"/>
</dbReference>
<dbReference type="SUPFAM" id="SSF52317">
    <property type="entry name" value="Class I glutamine amidotransferase-like"/>
    <property type="match status" value="1"/>
</dbReference>
<dbReference type="PROSITE" id="PS51273">
    <property type="entry name" value="GATASE_TYPE_1"/>
    <property type="match status" value="1"/>
</dbReference>
<name>PURQ_EXIS2</name>
<accession>B1YJ04</accession>
<organism>
    <name type="scientific">Exiguobacterium sibiricum (strain DSM 17290 / CCUG 55495 / CIP 109462 / JCM 13490 / 255-15)</name>
    <dbReference type="NCBI Taxonomy" id="262543"/>
    <lineage>
        <taxon>Bacteria</taxon>
        <taxon>Bacillati</taxon>
        <taxon>Bacillota</taxon>
        <taxon>Bacilli</taxon>
        <taxon>Bacillales</taxon>
        <taxon>Bacillales Family XII. Incertae Sedis</taxon>
        <taxon>Exiguobacterium</taxon>
    </lineage>
</organism>
<gene>
    <name evidence="1" type="primary">purQ</name>
    <name type="ordered locus">Exig_0452</name>
</gene>
<proteinExistence type="inferred from homology"/>